<reference key="1">
    <citation type="journal article" date="1996" name="Microbiology">
        <title>Systematic sequencing of the 283 kb 210 degrees-232 degrees region of the Bacillus subtilis genome containing the skin element and many sporulation genes.</title>
        <authorList>
            <person name="Mizuno M."/>
            <person name="Masuda S."/>
            <person name="Takemaru K."/>
            <person name="Hosono S."/>
            <person name="Sato T."/>
            <person name="Takeuchi M."/>
            <person name="Kobayashi Y."/>
        </authorList>
    </citation>
    <scope>NUCLEOTIDE SEQUENCE [GENOMIC DNA]</scope>
    <source>
        <strain>168 / JH642</strain>
    </source>
</reference>
<reference key="2">
    <citation type="journal article" date="1997" name="Nature">
        <title>The complete genome sequence of the Gram-positive bacterium Bacillus subtilis.</title>
        <authorList>
            <person name="Kunst F."/>
            <person name="Ogasawara N."/>
            <person name="Moszer I."/>
            <person name="Albertini A.M."/>
            <person name="Alloni G."/>
            <person name="Azevedo V."/>
            <person name="Bertero M.G."/>
            <person name="Bessieres P."/>
            <person name="Bolotin A."/>
            <person name="Borchert S."/>
            <person name="Borriss R."/>
            <person name="Boursier L."/>
            <person name="Brans A."/>
            <person name="Braun M."/>
            <person name="Brignell S.C."/>
            <person name="Bron S."/>
            <person name="Brouillet S."/>
            <person name="Bruschi C.V."/>
            <person name="Caldwell B."/>
            <person name="Capuano V."/>
            <person name="Carter N.M."/>
            <person name="Choi S.-K."/>
            <person name="Codani J.-J."/>
            <person name="Connerton I.F."/>
            <person name="Cummings N.J."/>
            <person name="Daniel R.A."/>
            <person name="Denizot F."/>
            <person name="Devine K.M."/>
            <person name="Duesterhoeft A."/>
            <person name="Ehrlich S.D."/>
            <person name="Emmerson P.T."/>
            <person name="Entian K.-D."/>
            <person name="Errington J."/>
            <person name="Fabret C."/>
            <person name="Ferrari E."/>
            <person name="Foulger D."/>
            <person name="Fritz C."/>
            <person name="Fujita M."/>
            <person name="Fujita Y."/>
            <person name="Fuma S."/>
            <person name="Galizzi A."/>
            <person name="Galleron N."/>
            <person name="Ghim S.-Y."/>
            <person name="Glaser P."/>
            <person name="Goffeau A."/>
            <person name="Golightly E.J."/>
            <person name="Grandi G."/>
            <person name="Guiseppi G."/>
            <person name="Guy B.J."/>
            <person name="Haga K."/>
            <person name="Haiech J."/>
            <person name="Harwood C.R."/>
            <person name="Henaut A."/>
            <person name="Hilbert H."/>
            <person name="Holsappel S."/>
            <person name="Hosono S."/>
            <person name="Hullo M.-F."/>
            <person name="Itaya M."/>
            <person name="Jones L.-M."/>
            <person name="Joris B."/>
            <person name="Karamata D."/>
            <person name="Kasahara Y."/>
            <person name="Klaerr-Blanchard M."/>
            <person name="Klein C."/>
            <person name="Kobayashi Y."/>
            <person name="Koetter P."/>
            <person name="Koningstein G."/>
            <person name="Krogh S."/>
            <person name="Kumano M."/>
            <person name="Kurita K."/>
            <person name="Lapidus A."/>
            <person name="Lardinois S."/>
            <person name="Lauber J."/>
            <person name="Lazarevic V."/>
            <person name="Lee S.-M."/>
            <person name="Levine A."/>
            <person name="Liu H."/>
            <person name="Masuda S."/>
            <person name="Mauel C."/>
            <person name="Medigue C."/>
            <person name="Medina N."/>
            <person name="Mellado R.P."/>
            <person name="Mizuno M."/>
            <person name="Moestl D."/>
            <person name="Nakai S."/>
            <person name="Noback M."/>
            <person name="Noone D."/>
            <person name="O'Reilly M."/>
            <person name="Ogawa K."/>
            <person name="Ogiwara A."/>
            <person name="Oudega B."/>
            <person name="Park S.-H."/>
            <person name="Parro V."/>
            <person name="Pohl T.M."/>
            <person name="Portetelle D."/>
            <person name="Porwollik S."/>
            <person name="Prescott A.M."/>
            <person name="Presecan E."/>
            <person name="Pujic P."/>
            <person name="Purnelle B."/>
            <person name="Rapoport G."/>
            <person name="Rey M."/>
            <person name="Reynolds S."/>
            <person name="Rieger M."/>
            <person name="Rivolta C."/>
            <person name="Rocha E."/>
            <person name="Roche B."/>
            <person name="Rose M."/>
            <person name="Sadaie Y."/>
            <person name="Sato T."/>
            <person name="Scanlan E."/>
            <person name="Schleich S."/>
            <person name="Schroeter R."/>
            <person name="Scoffone F."/>
            <person name="Sekiguchi J."/>
            <person name="Sekowska A."/>
            <person name="Seror S.J."/>
            <person name="Serror P."/>
            <person name="Shin B.-S."/>
            <person name="Soldo B."/>
            <person name="Sorokin A."/>
            <person name="Tacconi E."/>
            <person name="Takagi T."/>
            <person name="Takahashi H."/>
            <person name="Takemaru K."/>
            <person name="Takeuchi M."/>
            <person name="Tamakoshi A."/>
            <person name="Tanaka T."/>
            <person name="Terpstra P."/>
            <person name="Tognoni A."/>
            <person name="Tosato V."/>
            <person name="Uchiyama S."/>
            <person name="Vandenbol M."/>
            <person name="Vannier F."/>
            <person name="Vassarotti A."/>
            <person name="Viari A."/>
            <person name="Wambutt R."/>
            <person name="Wedler E."/>
            <person name="Wedler H."/>
            <person name="Weitzenegger T."/>
            <person name="Winters P."/>
            <person name="Wipat A."/>
            <person name="Yamamoto H."/>
            <person name="Yamane K."/>
            <person name="Yasumoto K."/>
            <person name="Yata K."/>
            <person name="Yoshida K."/>
            <person name="Yoshikawa H.-F."/>
            <person name="Zumstein E."/>
            <person name="Yoshikawa H."/>
            <person name="Danchin A."/>
        </authorList>
    </citation>
    <scope>NUCLEOTIDE SEQUENCE [LARGE SCALE GENOMIC DNA]</scope>
    <source>
        <strain>168</strain>
    </source>
</reference>
<reference key="3">
    <citation type="journal article" date="2009" name="Microbiology">
        <title>From a consortium sequence to a unified sequence: the Bacillus subtilis 168 reference genome a decade later.</title>
        <authorList>
            <person name="Barbe V."/>
            <person name="Cruveiller S."/>
            <person name="Kunst F."/>
            <person name="Lenoble P."/>
            <person name="Meurice G."/>
            <person name="Sekowska A."/>
            <person name="Vallenet D."/>
            <person name="Wang T."/>
            <person name="Moszer I."/>
            <person name="Medigue C."/>
            <person name="Danchin A."/>
        </authorList>
    </citation>
    <scope>SEQUENCE REVISION TO 96</scope>
</reference>
<reference key="4">
    <citation type="journal article" date="1988" name="Gene">
        <title>Characterization of signal-sequence-coding regions selected from the Bacillus subtilis chromosome.</title>
        <authorList>
            <person name="Smith H."/>
            <person name="de Jong A."/>
            <person name="Bron S."/>
            <person name="Venema G."/>
        </authorList>
    </citation>
    <scope>NUCLEOTIDE SEQUENCE [GENOMIC DNA] OF 1-47</scope>
</reference>
<proteinExistence type="inferred from homology"/>
<organism>
    <name type="scientific">Bacillus subtilis (strain 168)</name>
    <dbReference type="NCBI Taxonomy" id="224308"/>
    <lineage>
        <taxon>Bacteria</taxon>
        <taxon>Bacillati</taxon>
        <taxon>Bacillota</taxon>
        <taxon>Bacilli</taxon>
        <taxon>Bacillales</taxon>
        <taxon>Bacillaceae</taxon>
        <taxon>Bacillus</taxon>
    </lineage>
</organism>
<protein>
    <recommendedName>
        <fullName>Uncharacterized lipoprotein YqiH</fullName>
    </recommendedName>
    <alternativeName>
        <fullName>PSPB9'</fullName>
    </alternativeName>
</protein>
<sequence length="97" mass="10756">MKQTVLLLFTALFLSGCSVASADDSVPRFTEEGKYIGSADPHTIAVSLNGEETMIQVPKDKRDECESLPDQTHVLVKYTKKDNGTLQLEDIQLRKNS</sequence>
<evidence type="ECO:0000255" key="1">
    <source>
        <dbReference type="PROSITE-ProRule" id="PRU00303"/>
    </source>
</evidence>
<evidence type="ECO:0000305" key="2"/>
<dbReference type="EMBL" id="D84432">
    <property type="protein sequence ID" value="BAA12583.1"/>
    <property type="molecule type" value="Genomic_DNA"/>
</dbReference>
<dbReference type="EMBL" id="AL009126">
    <property type="protein sequence ID" value="CAB14351.2"/>
    <property type="molecule type" value="Genomic_DNA"/>
</dbReference>
<dbReference type="EMBL" id="M22911">
    <property type="protein sequence ID" value="AAA22827.1"/>
    <property type="molecule type" value="Genomic_DNA"/>
</dbReference>
<dbReference type="PIR" id="D69961">
    <property type="entry name" value="D69961"/>
</dbReference>
<dbReference type="RefSeq" id="NP_390300.2">
    <property type="nucleotide sequence ID" value="NC_000964.3"/>
</dbReference>
<dbReference type="RefSeq" id="WP_003230284.1">
    <property type="nucleotide sequence ID" value="NZ_OZ025638.1"/>
</dbReference>
<dbReference type="SMR" id="P40770"/>
<dbReference type="FunCoup" id="P40770">
    <property type="interactions" value="77"/>
</dbReference>
<dbReference type="STRING" id="224308.BSU24200"/>
<dbReference type="PaxDb" id="224308-BSU24200"/>
<dbReference type="EnsemblBacteria" id="CAB14351">
    <property type="protein sequence ID" value="CAB14351"/>
    <property type="gene ID" value="BSU_24200"/>
</dbReference>
<dbReference type="GeneID" id="938658"/>
<dbReference type="KEGG" id="bsu:BSU24200"/>
<dbReference type="PATRIC" id="fig|224308.179.peg.2634"/>
<dbReference type="InParanoid" id="P40770"/>
<dbReference type="OrthoDB" id="2920409at2"/>
<dbReference type="BioCyc" id="BSUB:BSU24200-MONOMER"/>
<dbReference type="Proteomes" id="UP000001570">
    <property type="component" value="Chromosome"/>
</dbReference>
<dbReference type="GO" id="GO:0005886">
    <property type="term" value="C:plasma membrane"/>
    <property type="evidence" value="ECO:0007669"/>
    <property type="project" value="UniProtKB-SubCell"/>
</dbReference>
<dbReference type="PROSITE" id="PS51257">
    <property type="entry name" value="PROKAR_LIPOPROTEIN"/>
    <property type="match status" value="1"/>
</dbReference>
<gene>
    <name type="primary">yqiH</name>
    <name type="synonym">yzpA</name>
    <name type="ordered locus">BSU24200</name>
</gene>
<feature type="signal peptide" evidence="1">
    <location>
        <begin position="1"/>
        <end position="16"/>
    </location>
</feature>
<feature type="chain" id="PRO_0000018064" description="Uncharacterized lipoprotein YqiH">
    <location>
        <begin position="17"/>
        <end position="97"/>
    </location>
</feature>
<feature type="lipid moiety-binding region" description="N-palmitoyl cysteine" evidence="1">
    <location>
        <position position="17"/>
    </location>
</feature>
<feature type="lipid moiety-binding region" description="S-diacylglycerol cysteine" evidence="1">
    <location>
        <position position="17"/>
    </location>
</feature>
<feature type="sequence conflict" description="In Ref. 4; AAA22827." evidence="2" ref="4">
    <original>HTIAVSL</original>
    <variation>LESTAQA</variation>
    <location>
        <begin position="42"/>
        <end position="48"/>
    </location>
</feature>
<feature type="sequence conflict" description="In Ref. 1; BAA12583." evidence="2" ref="1">
    <original>N</original>
    <variation>T</variation>
    <location>
        <position position="96"/>
    </location>
</feature>
<keyword id="KW-1003">Cell membrane</keyword>
<keyword id="KW-0449">Lipoprotein</keyword>
<keyword id="KW-0472">Membrane</keyword>
<keyword id="KW-0564">Palmitate</keyword>
<keyword id="KW-1185">Reference proteome</keyword>
<keyword id="KW-0732">Signal</keyword>
<comment type="subcellular location">
    <subcellularLocation>
        <location evidence="1">Cell membrane</location>
        <topology evidence="1">Lipid-anchor</topology>
    </subcellularLocation>
</comment>
<accession>P40770</accession>
<name>YQIH_BACSU</name>